<gene>
    <name evidence="1" type="primary">rbcL</name>
</gene>
<keyword id="KW-0007">Acetylation</keyword>
<keyword id="KW-0113">Calvin cycle</keyword>
<keyword id="KW-0120">Carbon dioxide fixation</keyword>
<keyword id="KW-0150">Chloroplast</keyword>
<keyword id="KW-1015">Disulfide bond</keyword>
<keyword id="KW-0456">Lyase</keyword>
<keyword id="KW-0460">Magnesium</keyword>
<keyword id="KW-0479">Metal-binding</keyword>
<keyword id="KW-0503">Monooxygenase</keyword>
<keyword id="KW-0560">Oxidoreductase</keyword>
<keyword id="KW-0601">Photorespiration</keyword>
<keyword id="KW-0602">Photosynthesis</keyword>
<keyword id="KW-0934">Plastid</keyword>
<name>RBL_WELMI</name>
<comment type="function">
    <text evidence="1">RuBisCO catalyzes two reactions: the carboxylation of D-ribulose 1,5-bisphosphate, the primary event in carbon dioxide fixation, as well as the oxidative fragmentation of the pentose substrate in the photorespiration process. Both reactions occur simultaneously and in competition at the same active site.</text>
</comment>
<comment type="catalytic activity">
    <reaction evidence="1">
        <text>2 (2R)-3-phosphoglycerate + 2 H(+) = D-ribulose 1,5-bisphosphate + CO2 + H2O</text>
        <dbReference type="Rhea" id="RHEA:23124"/>
        <dbReference type="ChEBI" id="CHEBI:15377"/>
        <dbReference type="ChEBI" id="CHEBI:15378"/>
        <dbReference type="ChEBI" id="CHEBI:16526"/>
        <dbReference type="ChEBI" id="CHEBI:57870"/>
        <dbReference type="ChEBI" id="CHEBI:58272"/>
        <dbReference type="EC" id="4.1.1.39"/>
    </reaction>
</comment>
<comment type="catalytic activity">
    <reaction evidence="1">
        <text>D-ribulose 1,5-bisphosphate + O2 = 2-phosphoglycolate + (2R)-3-phosphoglycerate + 2 H(+)</text>
        <dbReference type="Rhea" id="RHEA:36631"/>
        <dbReference type="ChEBI" id="CHEBI:15378"/>
        <dbReference type="ChEBI" id="CHEBI:15379"/>
        <dbReference type="ChEBI" id="CHEBI:57870"/>
        <dbReference type="ChEBI" id="CHEBI:58033"/>
        <dbReference type="ChEBI" id="CHEBI:58272"/>
    </reaction>
</comment>
<comment type="cofactor">
    <cofactor evidence="1">
        <name>Mg(2+)</name>
        <dbReference type="ChEBI" id="CHEBI:18420"/>
    </cofactor>
    <text evidence="1">Binds 1 Mg(2+) ion per subunit.</text>
</comment>
<comment type="subunit">
    <text evidence="1">Heterohexadecamer of 8 large chains and 8 small chains; disulfide-linked. The disulfide link is formed within the large subunit homodimers.</text>
</comment>
<comment type="subcellular location">
    <subcellularLocation>
        <location>Plastid</location>
        <location>Chloroplast</location>
    </subcellularLocation>
</comment>
<comment type="PTM">
    <text evidence="1">The disulfide bond which can form in the large chain dimeric partners within the hexadecamer appears to be associated with oxidative stress and protein turnover.</text>
</comment>
<comment type="miscellaneous">
    <text evidence="1">The basic functional RuBisCO is composed of a large chain homodimer in a 'head-to-tail' conformation. In form I RuBisCO this homodimer is arranged in a barrel-like tetramer with the small subunits forming a tetrameric 'cap' on each end of the 'barrel'.</text>
</comment>
<comment type="similarity">
    <text evidence="1">Belongs to the RuBisCO large chain family. Type I subfamily.</text>
</comment>
<organism>
    <name type="scientific">Welwitschia mirabilis</name>
    <name type="common">Tree tumbo</name>
    <name type="synonym">Welwitschia bainesii</name>
    <dbReference type="NCBI Taxonomy" id="3377"/>
    <lineage>
        <taxon>Eukaryota</taxon>
        <taxon>Viridiplantae</taxon>
        <taxon>Streptophyta</taxon>
        <taxon>Embryophyta</taxon>
        <taxon>Tracheophyta</taxon>
        <taxon>Spermatophyta</taxon>
        <taxon>Gnetopsida</taxon>
        <taxon>Gnetidae</taxon>
        <taxon>Welwitschiales</taxon>
        <taxon>Welwitschiaceae</taxon>
        <taxon>Welwitschia</taxon>
    </lineage>
</organism>
<evidence type="ECO:0000255" key="1">
    <source>
        <dbReference type="HAMAP-Rule" id="MF_01338"/>
    </source>
</evidence>
<protein>
    <recommendedName>
        <fullName evidence="1">Ribulose bisphosphate carboxylase large chain</fullName>
        <shortName evidence="1">RuBisCO large subunit</shortName>
        <ecNumber evidence="1">4.1.1.39</ecNumber>
    </recommendedName>
</protein>
<accession>P48719</accession>
<accession>B2Y1W8</accession>
<accession>B7ZI40</accession>
<accession>Q9THI3</accession>
<geneLocation type="chloroplast"/>
<dbReference type="EC" id="4.1.1.39" evidence="1"/>
<dbReference type="EMBL" id="AJ235814">
    <property type="protein sequence ID" value="CAA15404.1"/>
    <property type="molecule type" value="Genomic_DNA"/>
</dbReference>
<dbReference type="EMBL" id="EU342371">
    <property type="protein sequence ID" value="ABY26798.1"/>
    <property type="molecule type" value="Genomic_DNA"/>
</dbReference>
<dbReference type="EMBL" id="AP009568">
    <property type="protein sequence ID" value="BAH11220.1"/>
    <property type="molecule type" value="Genomic_DNA"/>
</dbReference>
<dbReference type="EMBL" id="D10735">
    <property type="protein sequence ID" value="BAA01579.1"/>
    <property type="molecule type" value="Genomic_DNA"/>
</dbReference>
<dbReference type="RefSeq" id="YP_001876585.1">
    <property type="nucleotide sequence ID" value="NC_010654.1"/>
</dbReference>
<dbReference type="SMR" id="P48719"/>
<dbReference type="GeneID" id="6276201"/>
<dbReference type="GO" id="GO:0009507">
    <property type="term" value="C:chloroplast"/>
    <property type="evidence" value="ECO:0007669"/>
    <property type="project" value="UniProtKB-SubCell"/>
</dbReference>
<dbReference type="GO" id="GO:0000287">
    <property type="term" value="F:magnesium ion binding"/>
    <property type="evidence" value="ECO:0007669"/>
    <property type="project" value="UniProtKB-UniRule"/>
</dbReference>
<dbReference type="GO" id="GO:0004497">
    <property type="term" value="F:monooxygenase activity"/>
    <property type="evidence" value="ECO:0007669"/>
    <property type="project" value="UniProtKB-KW"/>
</dbReference>
<dbReference type="GO" id="GO:0016984">
    <property type="term" value="F:ribulose-bisphosphate carboxylase activity"/>
    <property type="evidence" value="ECO:0007669"/>
    <property type="project" value="UniProtKB-UniRule"/>
</dbReference>
<dbReference type="GO" id="GO:0009853">
    <property type="term" value="P:photorespiration"/>
    <property type="evidence" value="ECO:0007669"/>
    <property type="project" value="UniProtKB-KW"/>
</dbReference>
<dbReference type="GO" id="GO:0019253">
    <property type="term" value="P:reductive pentose-phosphate cycle"/>
    <property type="evidence" value="ECO:0007669"/>
    <property type="project" value="UniProtKB-UniRule"/>
</dbReference>
<dbReference type="CDD" id="cd08212">
    <property type="entry name" value="RuBisCO_large_I"/>
    <property type="match status" value="1"/>
</dbReference>
<dbReference type="FunFam" id="3.20.20.110:FF:000001">
    <property type="entry name" value="Ribulose bisphosphate carboxylase large chain"/>
    <property type="match status" value="1"/>
</dbReference>
<dbReference type="FunFam" id="3.30.70.150:FF:000001">
    <property type="entry name" value="Ribulose bisphosphate carboxylase large chain"/>
    <property type="match status" value="1"/>
</dbReference>
<dbReference type="Gene3D" id="3.20.20.110">
    <property type="entry name" value="Ribulose bisphosphate carboxylase, large subunit, C-terminal domain"/>
    <property type="match status" value="1"/>
</dbReference>
<dbReference type="Gene3D" id="3.30.70.150">
    <property type="entry name" value="RuBisCO large subunit, N-terminal domain"/>
    <property type="match status" value="1"/>
</dbReference>
<dbReference type="HAMAP" id="MF_01338">
    <property type="entry name" value="RuBisCO_L_type1"/>
    <property type="match status" value="1"/>
</dbReference>
<dbReference type="InterPro" id="IPR033966">
    <property type="entry name" value="RuBisCO"/>
</dbReference>
<dbReference type="InterPro" id="IPR020878">
    <property type="entry name" value="RuBisCo_large_chain_AS"/>
</dbReference>
<dbReference type="InterPro" id="IPR000685">
    <property type="entry name" value="RuBisCO_lsu_C"/>
</dbReference>
<dbReference type="InterPro" id="IPR036376">
    <property type="entry name" value="RuBisCO_lsu_C_sf"/>
</dbReference>
<dbReference type="InterPro" id="IPR017443">
    <property type="entry name" value="RuBisCO_lsu_fd_N"/>
</dbReference>
<dbReference type="InterPro" id="IPR036422">
    <property type="entry name" value="RuBisCO_lsu_N_sf"/>
</dbReference>
<dbReference type="InterPro" id="IPR020888">
    <property type="entry name" value="RuBisCO_lsuI"/>
</dbReference>
<dbReference type="NCBIfam" id="NF003252">
    <property type="entry name" value="PRK04208.1"/>
    <property type="match status" value="1"/>
</dbReference>
<dbReference type="PANTHER" id="PTHR42704">
    <property type="entry name" value="RIBULOSE BISPHOSPHATE CARBOXYLASE"/>
    <property type="match status" value="1"/>
</dbReference>
<dbReference type="PANTHER" id="PTHR42704:SF16">
    <property type="entry name" value="RIBULOSE BISPHOSPHATE CARBOXYLASE LARGE CHAIN"/>
    <property type="match status" value="1"/>
</dbReference>
<dbReference type="Pfam" id="PF00016">
    <property type="entry name" value="RuBisCO_large"/>
    <property type="match status" value="1"/>
</dbReference>
<dbReference type="Pfam" id="PF02788">
    <property type="entry name" value="RuBisCO_large_N"/>
    <property type="match status" value="1"/>
</dbReference>
<dbReference type="SFLD" id="SFLDG01052">
    <property type="entry name" value="RuBisCO"/>
    <property type="match status" value="1"/>
</dbReference>
<dbReference type="SFLD" id="SFLDS00014">
    <property type="entry name" value="RuBisCO"/>
    <property type="match status" value="1"/>
</dbReference>
<dbReference type="SFLD" id="SFLDG00301">
    <property type="entry name" value="RuBisCO-like_proteins"/>
    <property type="match status" value="1"/>
</dbReference>
<dbReference type="SUPFAM" id="SSF51649">
    <property type="entry name" value="RuBisCo, C-terminal domain"/>
    <property type="match status" value="1"/>
</dbReference>
<dbReference type="SUPFAM" id="SSF54966">
    <property type="entry name" value="RuBisCO, large subunit, small (N-terminal) domain"/>
    <property type="match status" value="1"/>
</dbReference>
<dbReference type="PROSITE" id="PS00157">
    <property type="entry name" value="RUBISCO_LARGE"/>
    <property type="match status" value="1"/>
</dbReference>
<sequence>MSPKTETKASVGFQAGVKDYRLTYYTPEYQTKDTDILAAFRVTPQPGVPPEEAGAAVAAESSTGTWTTVWTDGLTSLDRYKGRCYDLEPVPGEDNQYIAYVAYPLDLFEEGSVTNMFTSIVGNVFGFKALRALRLEDLRIPTSYIKTFQGPPHGIQVERDKLNKYGRPLLGCTIKPKLGLSAKNYGRAVYECLRGGLDFTKDDENVNSQPFMRWRDRFVFCAEAIYKAQAETGEIKGHYLNATAGTCEEMIKRAVFARELGVPIVMHDYLTGGFTANTTLAHYCRDNGLLLHIHRAMHAVIDRQKNHGMHFRVLAKALRMSGGDHIHAGTVVGKLEGEREITLGFVDLLRDDFIEKDRSRGIYFTQDWVSMPGVMPVASGGIHVWHMPALTDIFGDDAVLQFGGGTLGHPWGNAPGAVANRVALEACVQARNEGRDLAREGNEVIREAAKWSPELAAACEVWKEIKFEFESVDTL</sequence>
<reference key="1">
    <citation type="submission" date="1998-12" db="EMBL/GenBank/DDBJ databases">
        <authorList>
            <person name="Savolainen V."/>
        </authorList>
    </citation>
    <scope>NUCLEOTIDE SEQUENCE [GENOMIC DNA]</scope>
</reference>
<reference key="2">
    <citation type="journal article" date="2008" name="BMC Evol. Biol.">
        <title>The complete plastid genome sequence of Welwitschia mirabilis: an unusually compact plastome with accelerated divergence rates.</title>
        <authorList>
            <person name="McCoy S.R."/>
            <person name="Kuehl J.V."/>
            <person name="Boore J.L."/>
            <person name="Raubeson L.A."/>
        </authorList>
    </citation>
    <scope>NUCLEOTIDE SEQUENCE [LARGE SCALE GENOMIC DNA]</scope>
</reference>
<reference key="3">
    <citation type="journal article" date="2009" name="Mol. Phylogenet. Evol.">
        <title>Evolution of reduced and compact chloroplast genomes (cpDNAs) in gnetophytes: Selection toward a lower-cost strategy.</title>
        <authorList>
            <person name="Wu C.-S."/>
            <person name="Lai Y.-T."/>
            <person name="Lin C.-P."/>
            <person name="Wang Y.-N."/>
            <person name="Chaw S.-M."/>
        </authorList>
    </citation>
    <scope>NUCLEOTIDE SEQUENCE [LARGE SCALE GENOMIC DNA]</scope>
</reference>
<reference key="4">
    <citation type="journal article" date="1992" name="Bot. Mag. Tokyo">
        <title>Phylogenetic relationships in gnetophyta deduced from rbcL gene sequences.</title>
        <authorList>
            <person name="Hasebe M."/>
            <person name="Ito M."/>
            <person name="Kofuji R."/>
            <person name="Iwatsuki K."/>
            <person name="Ueda K."/>
        </authorList>
    </citation>
    <scope>NUCLEOTIDE SEQUENCE [GENOMIC DNA] OF 10-453</scope>
</reference>
<feature type="propeptide" id="PRO_0000298919" evidence="1">
    <location>
        <begin position="1"/>
        <end position="2"/>
    </location>
</feature>
<feature type="chain" id="PRO_0000062616" description="Ribulose bisphosphate carboxylase large chain">
    <location>
        <begin position="3"/>
        <end position="475"/>
    </location>
</feature>
<feature type="active site" description="Proton acceptor" evidence="1">
    <location>
        <position position="175"/>
    </location>
</feature>
<feature type="active site" description="Proton acceptor" evidence="1">
    <location>
        <position position="294"/>
    </location>
</feature>
<feature type="binding site" description="in homodimeric partner" evidence="1">
    <location>
        <position position="123"/>
    </location>
    <ligand>
        <name>substrate</name>
    </ligand>
</feature>
<feature type="binding site" evidence="1">
    <location>
        <position position="173"/>
    </location>
    <ligand>
        <name>substrate</name>
    </ligand>
</feature>
<feature type="binding site" evidence="1">
    <location>
        <position position="177"/>
    </location>
    <ligand>
        <name>substrate</name>
    </ligand>
</feature>
<feature type="binding site" description="via carbamate group" evidence="1">
    <location>
        <position position="201"/>
    </location>
    <ligand>
        <name>Mg(2+)</name>
        <dbReference type="ChEBI" id="CHEBI:18420"/>
    </ligand>
</feature>
<feature type="binding site" evidence="1">
    <location>
        <position position="203"/>
    </location>
    <ligand>
        <name>Mg(2+)</name>
        <dbReference type="ChEBI" id="CHEBI:18420"/>
    </ligand>
</feature>
<feature type="binding site" evidence="1">
    <location>
        <position position="204"/>
    </location>
    <ligand>
        <name>Mg(2+)</name>
        <dbReference type="ChEBI" id="CHEBI:18420"/>
    </ligand>
</feature>
<feature type="binding site" evidence="1">
    <location>
        <position position="295"/>
    </location>
    <ligand>
        <name>substrate</name>
    </ligand>
</feature>
<feature type="binding site" evidence="1">
    <location>
        <position position="327"/>
    </location>
    <ligand>
        <name>substrate</name>
    </ligand>
</feature>
<feature type="binding site" evidence="1">
    <location>
        <position position="379"/>
    </location>
    <ligand>
        <name>substrate</name>
    </ligand>
</feature>
<feature type="site" description="Transition state stabilizer" evidence="1">
    <location>
        <position position="334"/>
    </location>
</feature>
<feature type="modified residue" description="N-acetylproline" evidence="1">
    <location>
        <position position="3"/>
    </location>
</feature>
<feature type="modified residue" description="N6-carboxylysine" evidence="1">
    <location>
        <position position="201"/>
    </location>
</feature>
<feature type="disulfide bond" description="Interchain; in linked form" evidence="1">
    <location>
        <position position="247"/>
    </location>
</feature>
<proteinExistence type="inferred from homology"/>